<sequence length="162" mass="17463">MKTPITEAIATADNQGRFLSNTELQAVNGRYQRATASLTAAKALTGSAQRLITGAAQAVYNKFPYTTQMPGPAYASSAIGKAKCARDIGYYLRMVTYTLVVGGTGPMDEYLVAGLEEINRSFDLSPSWYIEALQYIKNSHGLSGQVANEANAYIDYAINTSL</sequence>
<feature type="chain" id="PRO_0000199136" description="R-phycocyanin-1 subunit alpha">
    <location>
        <begin position="1"/>
        <end position="162"/>
    </location>
</feature>
<feature type="binding site" description="covalent" evidence="2 5">
    <location>
        <position position="84"/>
    </location>
    <ligand>
        <name>(2R,3E)-phycocyanobilin</name>
        <dbReference type="ChEBI" id="CHEBI:85275"/>
    </ligand>
</feature>
<proteinExistence type="evidence at protein level"/>
<reference key="1">
    <citation type="journal article" date="1994" name="Eur. J. Biochem.">
        <title>The complete amino acid sequence of R-phycocyanin-I alpha and beta subunits from the red alga Porphyridium cruentum. Structural and phylogenetic relationships of the phycocyanins within the phycobiliprotein families.</title>
        <authorList>
            <person name="Ducret A."/>
            <person name="Sidler W."/>
            <person name="Frank G."/>
            <person name="Zuber H."/>
        </authorList>
    </citation>
    <scope>PROTEIN SEQUENCE</scope>
    <scope>SUBUNIT</scope>
    <scope>SUBCELLULAR LOCATION</scope>
    <scope>CHROMOPHORE</scope>
    <source>
        <strain>1380-1A</strain>
    </source>
</reference>
<evidence type="ECO:0000250" key="1">
    <source>
        <dbReference type="UniProtKB" id="P00306"/>
    </source>
</evidence>
<evidence type="ECO:0000250" key="2">
    <source>
        <dbReference type="UniProtKB" id="P59858"/>
    </source>
</evidence>
<evidence type="ECO:0000269" key="3">
    <source>
    </source>
</evidence>
<evidence type="ECO:0000305" key="4"/>
<evidence type="ECO:0000305" key="5">
    <source>
    </source>
</evidence>
<organism>
    <name type="scientific">Porphyridium purpureum</name>
    <name type="common">Red alga</name>
    <name type="synonym">Porphyridium cruentum</name>
    <dbReference type="NCBI Taxonomy" id="35688"/>
    <lineage>
        <taxon>Eukaryota</taxon>
        <taxon>Rhodophyta</taxon>
        <taxon>Bangiophyceae</taxon>
        <taxon>Porphyridiales</taxon>
        <taxon>Porphyridiaceae</taxon>
        <taxon>Porphyridium</taxon>
    </lineage>
</organism>
<name>PHCA_PORPP</name>
<protein>
    <recommendedName>
        <fullName>R-phycocyanin-1 subunit alpha</fullName>
    </recommendedName>
    <alternativeName>
        <fullName>R-phycocyanin I alpha chain</fullName>
    </alternativeName>
</protein>
<geneLocation type="chloroplast"/>
<dbReference type="PIR" id="S43238">
    <property type="entry name" value="S43238"/>
</dbReference>
<dbReference type="PDB" id="7Y4L">
    <property type="method" value="EM"/>
    <property type="resolution" value="3.30 A"/>
    <property type="chains" value="C2/C6/CB/CC/CD/CE/E2/E6/EB/EC/ED/EE/G2/G6/GB/GC/GD/GE/I2/I6/IB/IC/ID/IE/K2/K6/KB/KC/KD/KE=1-160"/>
</dbReference>
<dbReference type="PDB" id="7Y5E">
    <property type="method" value="EM"/>
    <property type="resolution" value="3.30 A"/>
    <property type="chains" value="C1/C4/CE/CG/CH/CO/E1/E4/EE/EG/EH/EO/G1/G4/GE/GG/GH/GO/I1/I4/IE/IG/IH/IO/K1/K4/KE/KG/KH/KO=1-160"/>
</dbReference>
<dbReference type="PDB" id="7Y7A">
    <property type="method" value="EM"/>
    <property type="resolution" value="4.30 A"/>
    <property type="chains" value="C1/C4/C8/CI/CK/CP/CR/CS/Ce/Cj/Cl/Cn/E1/E4/E8/EI/EK/EP/ER/ES/Ee/Ej/El/En/G1/G4/G8/GI/GK/GP=1-160"/>
</dbReference>
<dbReference type="PDBsum" id="7Y4L"/>
<dbReference type="PDBsum" id="7Y5E"/>
<dbReference type="PDBsum" id="7Y7A"/>
<dbReference type="EMDB" id="EMD-33605"/>
<dbReference type="SMR" id="P37207"/>
<dbReference type="GO" id="GO:0009535">
    <property type="term" value="C:chloroplast thylakoid membrane"/>
    <property type="evidence" value="ECO:0007669"/>
    <property type="project" value="UniProtKB-SubCell"/>
</dbReference>
<dbReference type="GO" id="GO:0030089">
    <property type="term" value="C:phycobilisome"/>
    <property type="evidence" value="ECO:0007669"/>
    <property type="project" value="UniProtKB-KW"/>
</dbReference>
<dbReference type="GO" id="GO:0015979">
    <property type="term" value="P:photosynthesis"/>
    <property type="evidence" value="ECO:0007669"/>
    <property type="project" value="UniProtKB-KW"/>
</dbReference>
<dbReference type="CDD" id="cd14770">
    <property type="entry name" value="PC-PEC_alpha"/>
    <property type="match status" value="1"/>
</dbReference>
<dbReference type="Gene3D" id="1.10.490.20">
    <property type="entry name" value="Phycocyanins"/>
    <property type="match status" value="1"/>
</dbReference>
<dbReference type="InterPro" id="IPR009050">
    <property type="entry name" value="Globin-like_sf"/>
</dbReference>
<dbReference type="InterPro" id="IPR012128">
    <property type="entry name" value="Phycobilisome_asu/bsu"/>
</dbReference>
<dbReference type="InterPro" id="IPR038719">
    <property type="entry name" value="Phycobilisome_asu/bsu_sf"/>
</dbReference>
<dbReference type="InterPro" id="IPR006246">
    <property type="entry name" value="Phycocyanin_a"/>
</dbReference>
<dbReference type="NCBIfam" id="TIGR01338">
    <property type="entry name" value="phycocy_alpha"/>
    <property type="match status" value="1"/>
</dbReference>
<dbReference type="PANTHER" id="PTHR34011:SF4">
    <property type="entry name" value="C-PHYCOCYANIN ALPHA SUBUNIT"/>
    <property type="match status" value="1"/>
</dbReference>
<dbReference type="PANTHER" id="PTHR34011">
    <property type="entry name" value="PHYCOBILISOME 32.1 KDA LINKER POLYPEPTIDE, PHYCOCYANIN-ASSOCIATED, ROD 2-RELATED"/>
    <property type="match status" value="1"/>
</dbReference>
<dbReference type="Pfam" id="PF00502">
    <property type="entry name" value="Phycobilisome"/>
    <property type="match status" value="1"/>
</dbReference>
<dbReference type="PIRSF" id="PIRSF000081">
    <property type="entry name" value="Phycocyanin"/>
    <property type="match status" value="1"/>
</dbReference>
<dbReference type="SUPFAM" id="SSF46458">
    <property type="entry name" value="Globin-like"/>
    <property type="match status" value="1"/>
</dbReference>
<keyword id="KW-0002">3D-structure</keyword>
<keyword id="KW-0042">Antenna complex</keyword>
<keyword id="KW-0089">Bile pigment</keyword>
<keyword id="KW-0150">Chloroplast</keyword>
<keyword id="KW-0157">Chromophore</keyword>
<keyword id="KW-0903">Direct protein sequencing</keyword>
<keyword id="KW-0249">Electron transport</keyword>
<keyword id="KW-0472">Membrane</keyword>
<keyword id="KW-0602">Photosynthesis</keyword>
<keyword id="KW-0605">Phycobilisome</keyword>
<keyword id="KW-0934">Plastid</keyword>
<keyword id="KW-0793">Thylakoid</keyword>
<keyword id="KW-0813">Transport</keyword>
<comment type="function">
    <text>Light-harvesting photosynthetic bile pigment-protein from the phycobiliprotein complex (phycobilisome, PBS). Phycocyanin is the major phycobiliprotein in the PBS rod.</text>
</comment>
<comment type="subunit">
    <text evidence="1 3">Heterodimer of an alpha and a beta subunit (PubMed:8168545). Dimers further assemble into trimers and the trimers into hexamers. The basic functional unit of phycobiliproteins is a ring-shaped hexamer formed from two back-to-back trimers contacting via the alpha chain subunits. The trimers are composed of alpha/beta subunit heterodimers arranged around a three-fold axis of symmetry. The phycoerythrins also contain a gamma subunit which is located in the center of the hexamer (By similarity).</text>
</comment>
<comment type="subcellular location">
    <subcellularLocation>
        <location>Plastid</location>
        <location>Chloroplast thylakoid membrane</location>
        <topology>Peripheral membrane protein</topology>
        <orientation>Stromal side</orientation>
    </subcellularLocation>
    <text evidence="3">Part of the phycobilisome rod.</text>
</comment>
<comment type="PTM">
    <text evidence="3">Contains one covalently linked phycocyanobilin chromophore.</text>
</comment>
<comment type="similarity">
    <text evidence="4">Belongs to the phycobiliprotein family.</text>
</comment>
<gene>
    <name type="primary">rpcA</name>
    <name type="synonym">cpcA</name>
</gene>
<accession>P37207</accession>